<protein>
    <recommendedName>
        <fullName evidence="1">Zinc transport protein ZntB</fullName>
    </recommendedName>
</protein>
<organism>
    <name type="scientific">Shigella boydii serotype 18 (strain CDC 3083-94 / BS512)</name>
    <dbReference type="NCBI Taxonomy" id="344609"/>
    <lineage>
        <taxon>Bacteria</taxon>
        <taxon>Pseudomonadati</taxon>
        <taxon>Pseudomonadota</taxon>
        <taxon>Gammaproteobacteria</taxon>
        <taxon>Enterobacterales</taxon>
        <taxon>Enterobacteriaceae</taxon>
        <taxon>Shigella</taxon>
    </lineage>
</organism>
<reference key="1">
    <citation type="submission" date="2008-05" db="EMBL/GenBank/DDBJ databases">
        <title>Complete sequence of Shigella boydii serotype 18 strain BS512.</title>
        <authorList>
            <person name="Rasko D.A."/>
            <person name="Rosovitz M."/>
            <person name="Maurelli A.T."/>
            <person name="Myers G."/>
            <person name="Seshadri R."/>
            <person name="Cer R."/>
            <person name="Jiang L."/>
            <person name="Ravel J."/>
            <person name="Sebastian Y."/>
        </authorList>
    </citation>
    <scope>NUCLEOTIDE SEQUENCE [LARGE SCALE GENOMIC DNA]</scope>
    <source>
        <strain>CDC 3083-94 / BS512</strain>
    </source>
</reference>
<proteinExistence type="inferred from homology"/>
<accession>B2U0Y9</accession>
<sequence length="327" mass="36612">MEAIKGSDVNVPDAVFAWMLDGRGGVKPLENTDVIDEAHPCWLHLNYVHHDSAQWLATTPLLPNNVRDALAGESTRPRVSRLGEGTLITLRCINGSTDERPDQLVAMRVYMDGRLIVSTRQRKVLALDDVVSDLEEGTGPTDCGGWLVDVCDALTDHSSEFIEQLHDKIIDLEDNLLDQQIPPRGFLALLRKQLIVMRRYMAPQRDVYARLASERLPWMSDDQRRRMQDIADRLGRGLDEIDACIARTGVMADEIAQVMQENLARRTYTMSLMAMVFLPSTFLTGLFGVNLGGIPGGGWQFGFSIFCILLVVLIGGVALWLHRSKWL</sequence>
<gene>
    <name evidence="1" type="primary">zntB</name>
    <name type="ordered locus">SbBS512_E1587</name>
</gene>
<name>ZNTB_SHIB3</name>
<comment type="function">
    <text evidence="1">Zinc transporter. Acts as a Zn(2+):proton symporter, which likely mediates zinc ion uptake.</text>
</comment>
<comment type="catalytic activity">
    <reaction evidence="1">
        <text>Zn(2+)(out) + H(+)(out) = Zn(2+)(in) + H(+)(in)</text>
        <dbReference type="Rhea" id="RHEA:71195"/>
        <dbReference type="ChEBI" id="CHEBI:15378"/>
        <dbReference type="ChEBI" id="CHEBI:29105"/>
    </reaction>
    <physiologicalReaction direction="left-to-right" evidence="1">
        <dbReference type="Rhea" id="RHEA:71196"/>
    </physiologicalReaction>
</comment>
<comment type="subcellular location">
    <subcellularLocation>
        <location evidence="1">Cell inner membrane</location>
        <topology evidence="1">Multi-pass membrane protein</topology>
    </subcellularLocation>
</comment>
<comment type="similarity">
    <text evidence="1">Belongs to the CorA metal ion transporter (MIT) (TC 1.A.35) family.</text>
</comment>
<keyword id="KW-0997">Cell inner membrane</keyword>
<keyword id="KW-1003">Cell membrane</keyword>
<keyword id="KW-0406">Ion transport</keyword>
<keyword id="KW-0472">Membrane</keyword>
<keyword id="KW-1185">Reference proteome</keyword>
<keyword id="KW-0812">Transmembrane</keyword>
<keyword id="KW-1133">Transmembrane helix</keyword>
<keyword id="KW-0813">Transport</keyword>
<keyword id="KW-0862">Zinc</keyword>
<evidence type="ECO:0000255" key="1">
    <source>
        <dbReference type="HAMAP-Rule" id="MF_01565"/>
    </source>
</evidence>
<feature type="chain" id="PRO_1000147215" description="Zinc transport protein ZntB">
    <location>
        <begin position="1"/>
        <end position="327"/>
    </location>
</feature>
<feature type="topological domain" description="Cytoplasmic" evidence="1">
    <location>
        <begin position="1"/>
        <end position="273"/>
    </location>
</feature>
<feature type="transmembrane region" description="Helical" evidence="1">
    <location>
        <begin position="274"/>
        <end position="294"/>
    </location>
</feature>
<feature type="topological domain" description="Periplasmic" evidence="1">
    <location>
        <begin position="295"/>
        <end position="300"/>
    </location>
</feature>
<feature type="transmembrane region" description="Helical" evidence="1">
    <location>
        <begin position="301"/>
        <end position="321"/>
    </location>
</feature>
<feature type="topological domain" description="Cytoplasmic" evidence="1">
    <location>
        <begin position="322"/>
        <end position="327"/>
    </location>
</feature>
<dbReference type="EMBL" id="CP001063">
    <property type="protein sequence ID" value="ACD10377.1"/>
    <property type="molecule type" value="Genomic_DNA"/>
</dbReference>
<dbReference type="RefSeq" id="WP_000387388.1">
    <property type="nucleotide sequence ID" value="NC_010658.1"/>
</dbReference>
<dbReference type="SMR" id="B2U0Y9"/>
<dbReference type="STRING" id="344609.SbBS512_E1587"/>
<dbReference type="GeneID" id="93775479"/>
<dbReference type="KEGG" id="sbc:SbBS512_E1587"/>
<dbReference type="HOGENOM" id="CLU_007127_2_0_6"/>
<dbReference type="Proteomes" id="UP000001030">
    <property type="component" value="Chromosome"/>
</dbReference>
<dbReference type="GO" id="GO:0005886">
    <property type="term" value="C:plasma membrane"/>
    <property type="evidence" value="ECO:0007669"/>
    <property type="project" value="UniProtKB-SubCell"/>
</dbReference>
<dbReference type="GO" id="GO:0050897">
    <property type="term" value="F:cobalt ion binding"/>
    <property type="evidence" value="ECO:0007669"/>
    <property type="project" value="TreeGrafter"/>
</dbReference>
<dbReference type="GO" id="GO:0015087">
    <property type="term" value="F:cobalt ion transmembrane transporter activity"/>
    <property type="evidence" value="ECO:0007669"/>
    <property type="project" value="TreeGrafter"/>
</dbReference>
<dbReference type="GO" id="GO:0000287">
    <property type="term" value="F:magnesium ion binding"/>
    <property type="evidence" value="ECO:0007669"/>
    <property type="project" value="TreeGrafter"/>
</dbReference>
<dbReference type="GO" id="GO:0015095">
    <property type="term" value="F:magnesium ion transmembrane transporter activity"/>
    <property type="evidence" value="ECO:0007669"/>
    <property type="project" value="TreeGrafter"/>
</dbReference>
<dbReference type="GO" id="GO:0005385">
    <property type="term" value="F:zinc ion transmembrane transporter activity"/>
    <property type="evidence" value="ECO:0007669"/>
    <property type="project" value="UniProtKB-UniRule"/>
</dbReference>
<dbReference type="CDD" id="cd12833">
    <property type="entry name" value="ZntB-like_1"/>
    <property type="match status" value="1"/>
</dbReference>
<dbReference type="FunFam" id="1.20.58.340:FF:000002">
    <property type="entry name" value="Zinc transport protein ZntB"/>
    <property type="match status" value="1"/>
</dbReference>
<dbReference type="FunFam" id="1.20.58.340:FF:000003">
    <property type="entry name" value="Zinc transport protein ZntB"/>
    <property type="match status" value="1"/>
</dbReference>
<dbReference type="FunFam" id="3.30.460.20:FF:000001">
    <property type="entry name" value="Zinc transport protein ZntB"/>
    <property type="match status" value="1"/>
</dbReference>
<dbReference type="Gene3D" id="3.30.460.20">
    <property type="entry name" value="CorA soluble domain-like"/>
    <property type="match status" value="1"/>
</dbReference>
<dbReference type="Gene3D" id="1.20.58.340">
    <property type="entry name" value="Magnesium transport protein CorA, transmembrane region"/>
    <property type="match status" value="2"/>
</dbReference>
<dbReference type="HAMAP" id="MF_01565">
    <property type="entry name" value="ZntB"/>
    <property type="match status" value="1"/>
</dbReference>
<dbReference type="InterPro" id="IPR045861">
    <property type="entry name" value="CorA_cytoplasmic_dom"/>
</dbReference>
<dbReference type="InterPro" id="IPR045863">
    <property type="entry name" value="CorA_TM1_TM2"/>
</dbReference>
<dbReference type="InterPro" id="IPR002523">
    <property type="entry name" value="MgTranspt_CorA/ZnTranspt_ZntB"/>
</dbReference>
<dbReference type="InterPro" id="IPR023714">
    <property type="entry name" value="Zn_transp_ZntB"/>
</dbReference>
<dbReference type="NCBIfam" id="NF007092">
    <property type="entry name" value="PRK09546.1"/>
    <property type="match status" value="1"/>
</dbReference>
<dbReference type="PANTHER" id="PTHR46494">
    <property type="entry name" value="CORA FAMILY METAL ION TRANSPORTER (EUROFUNG)"/>
    <property type="match status" value="1"/>
</dbReference>
<dbReference type="PANTHER" id="PTHR46494:SF3">
    <property type="entry name" value="ZINC TRANSPORT PROTEIN ZNTB"/>
    <property type="match status" value="1"/>
</dbReference>
<dbReference type="Pfam" id="PF01544">
    <property type="entry name" value="CorA"/>
    <property type="match status" value="1"/>
</dbReference>
<dbReference type="SUPFAM" id="SSF143865">
    <property type="entry name" value="CorA soluble domain-like"/>
    <property type="match status" value="1"/>
</dbReference>
<dbReference type="SUPFAM" id="SSF144083">
    <property type="entry name" value="Magnesium transport protein CorA, transmembrane region"/>
    <property type="match status" value="1"/>
</dbReference>